<accession>Q48JY0</accession>
<reference key="1">
    <citation type="journal article" date="2005" name="J. Bacteriol.">
        <title>Whole-genome sequence analysis of Pseudomonas syringae pv. phaseolicola 1448A reveals divergence among pathovars in genes involved in virulence and transposition.</title>
        <authorList>
            <person name="Joardar V."/>
            <person name="Lindeberg M."/>
            <person name="Jackson R.W."/>
            <person name="Selengut J."/>
            <person name="Dodson R."/>
            <person name="Brinkac L.M."/>
            <person name="Daugherty S.C."/>
            <person name="DeBoy R.T."/>
            <person name="Durkin A.S."/>
            <person name="Gwinn Giglio M."/>
            <person name="Madupu R."/>
            <person name="Nelson W.C."/>
            <person name="Rosovitz M.J."/>
            <person name="Sullivan S.A."/>
            <person name="Crabtree J."/>
            <person name="Creasy T."/>
            <person name="Davidsen T.M."/>
            <person name="Haft D.H."/>
            <person name="Zafar N."/>
            <person name="Zhou L."/>
            <person name="Halpin R."/>
            <person name="Holley T."/>
            <person name="Khouri H.M."/>
            <person name="Feldblyum T.V."/>
            <person name="White O."/>
            <person name="Fraser C.M."/>
            <person name="Chatterjee A.K."/>
            <person name="Cartinhour S."/>
            <person name="Schneider D."/>
            <person name="Mansfield J.W."/>
            <person name="Collmer A."/>
            <person name="Buell R."/>
        </authorList>
    </citation>
    <scope>NUCLEOTIDE SEQUENCE [LARGE SCALE GENOMIC DNA]</scope>
    <source>
        <strain>1448A / Race 6</strain>
    </source>
</reference>
<organism>
    <name type="scientific">Pseudomonas savastanoi pv. phaseolicola (strain 1448A / Race 6)</name>
    <name type="common">Pseudomonas syringae pv. phaseolicola (strain 1448A / Race 6)</name>
    <dbReference type="NCBI Taxonomy" id="264730"/>
    <lineage>
        <taxon>Bacteria</taxon>
        <taxon>Pseudomonadati</taxon>
        <taxon>Pseudomonadota</taxon>
        <taxon>Gammaproteobacteria</taxon>
        <taxon>Pseudomonadales</taxon>
        <taxon>Pseudomonadaceae</taxon>
        <taxon>Pseudomonas</taxon>
    </lineage>
</organism>
<name>PYRD_PSE14</name>
<dbReference type="EC" id="1.3.5.2" evidence="1"/>
<dbReference type="EMBL" id="CP000058">
    <property type="protein sequence ID" value="AAZ35284.1"/>
    <property type="status" value="ALT_INIT"/>
    <property type="molecule type" value="Genomic_DNA"/>
</dbReference>
<dbReference type="RefSeq" id="WP_004659287.1">
    <property type="nucleotide sequence ID" value="NC_005773.3"/>
</dbReference>
<dbReference type="SMR" id="Q48JY0"/>
<dbReference type="KEGG" id="psp:PSPPH_2077"/>
<dbReference type="eggNOG" id="COG0167">
    <property type="taxonomic scope" value="Bacteria"/>
</dbReference>
<dbReference type="HOGENOM" id="CLU_013640_2_0_6"/>
<dbReference type="UniPathway" id="UPA00070">
    <property type="reaction ID" value="UER00946"/>
</dbReference>
<dbReference type="Proteomes" id="UP000000551">
    <property type="component" value="Chromosome"/>
</dbReference>
<dbReference type="GO" id="GO:0005737">
    <property type="term" value="C:cytoplasm"/>
    <property type="evidence" value="ECO:0007669"/>
    <property type="project" value="InterPro"/>
</dbReference>
<dbReference type="GO" id="GO:0005886">
    <property type="term" value="C:plasma membrane"/>
    <property type="evidence" value="ECO:0007669"/>
    <property type="project" value="UniProtKB-SubCell"/>
</dbReference>
<dbReference type="GO" id="GO:0106430">
    <property type="term" value="F:dihydroorotate dehydrogenase (quinone) activity"/>
    <property type="evidence" value="ECO:0007669"/>
    <property type="project" value="UniProtKB-EC"/>
</dbReference>
<dbReference type="GO" id="GO:0006207">
    <property type="term" value="P:'de novo' pyrimidine nucleobase biosynthetic process"/>
    <property type="evidence" value="ECO:0007669"/>
    <property type="project" value="InterPro"/>
</dbReference>
<dbReference type="GO" id="GO:0044205">
    <property type="term" value="P:'de novo' UMP biosynthetic process"/>
    <property type="evidence" value="ECO:0007669"/>
    <property type="project" value="UniProtKB-UniRule"/>
</dbReference>
<dbReference type="CDD" id="cd04738">
    <property type="entry name" value="DHOD_2_like"/>
    <property type="match status" value="1"/>
</dbReference>
<dbReference type="FunFam" id="3.20.20.70:FF:000028">
    <property type="entry name" value="Dihydroorotate dehydrogenase (quinone)"/>
    <property type="match status" value="1"/>
</dbReference>
<dbReference type="Gene3D" id="3.20.20.70">
    <property type="entry name" value="Aldolase class I"/>
    <property type="match status" value="1"/>
</dbReference>
<dbReference type="HAMAP" id="MF_00225">
    <property type="entry name" value="DHO_dh_type2"/>
    <property type="match status" value="1"/>
</dbReference>
<dbReference type="InterPro" id="IPR013785">
    <property type="entry name" value="Aldolase_TIM"/>
</dbReference>
<dbReference type="InterPro" id="IPR050074">
    <property type="entry name" value="DHO_dehydrogenase"/>
</dbReference>
<dbReference type="InterPro" id="IPR012135">
    <property type="entry name" value="Dihydroorotate_DH_1_2"/>
</dbReference>
<dbReference type="InterPro" id="IPR005719">
    <property type="entry name" value="Dihydroorotate_DH_2"/>
</dbReference>
<dbReference type="InterPro" id="IPR005720">
    <property type="entry name" value="Dihydroorotate_DH_cat"/>
</dbReference>
<dbReference type="InterPro" id="IPR001295">
    <property type="entry name" value="Dihydroorotate_DH_CS"/>
</dbReference>
<dbReference type="NCBIfam" id="NF003644">
    <property type="entry name" value="PRK05286.1-1"/>
    <property type="match status" value="1"/>
</dbReference>
<dbReference type="NCBIfam" id="NF003645">
    <property type="entry name" value="PRK05286.1-2"/>
    <property type="match status" value="1"/>
</dbReference>
<dbReference type="NCBIfam" id="NF003646">
    <property type="entry name" value="PRK05286.1-4"/>
    <property type="match status" value="1"/>
</dbReference>
<dbReference type="NCBIfam" id="NF003652">
    <property type="entry name" value="PRK05286.2-5"/>
    <property type="match status" value="1"/>
</dbReference>
<dbReference type="NCBIfam" id="TIGR01036">
    <property type="entry name" value="pyrD_sub2"/>
    <property type="match status" value="1"/>
</dbReference>
<dbReference type="PANTHER" id="PTHR48109:SF4">
    <property type="entry name" value="DIHYDROOROTATE DEHYDROGENASE (QUINONE), MITOCHONDRIAL"/>
    <property type="match status" value="1"/>
</dbReference>
<dbReference type="PANTHER" id="PTHR48109">
    <property type="entry name" value="DIHYDROOROTATE DEHYDROGENASE (QUINONE), MITOCHONDRIAL-RELATED"/>
    <property type="match status" value="1"/>
</dbReference>
<dbReference type="Pfam" id="PF01180">
    <property type="entry name" value="DHO_dh"/>
    <property type="match status" value="1"/>
</dbReference>
<dbReference type="PIRSF" id="PIRSF000164">
    <property type="entry name" value="DHO_oxidase"/>
    <property type="match status" value="1"/>
</dbReference>
<dbReference type="SUPFAM" id="SSF51395">
    <property type="entry name" value="FMN-linked oxidoreductases"/>
    <property type="match status" value="1"/>
</dbReference>
<dbReference type="PROSITE" id="PS00911">
    <property type="entry name" value="DHODEHASE_1"/>
    <property type="match status" value="1"/>
</dbReference>
<proteinExistence type="inferred from homology"/>
<sequence length="343" mass="36227">MYNLARQLLFKLSPETSHDLSLDLIGAGGRLGLNGLLSKSPAKLPVSVMGLEFPNPVGLAAGLDKNGAAIDGFAQLGFGFVEIGTVTPRPQPGNPKPRIFRLPHAEAIINRMGFNNLGVDNLVSRVQAAKYRGILGINIGKNFDTPVERAVDDYLICLDKVYAHASYVTVNVSSPNTPGLRSLQFGDSLKQLLQALSLRQQELTQRHGRRVPLAIKIAPDMSDEETVLVASALIESGMDAVIATNTTLSRQGVEGLPHGDEAGGLSGAPVREKSTHIVKVLAGELAGRLPIIAAGGITEGRHAAEKIAAGASLVQIYSGFIYKGPALIRESVDAIAAMPPAVR</sequence>
<keyword id="KW-1003">Cell membrane</keyword>
<keyword id="KW-0285">Flavoprotein</keyword>
<keyword id="KW-0288">FMN</keyword>
<keyword id="KW-0472">Membrane</keyword>
<keyword id="KW-0560">Oxidoreductase</keyword>
<keyword id="KW-0665">Pyrimidine biosynthesis</keyword>
<comment type="function">
    <text evidence="1">Catalyzes the conversion of dihydroorotate to orotate with quinone as electron acceptor.</text>
</comment>
<comment type="catalytic activity">
    <reaction evidence="1">
        <text>(S)-dihydroorotate + a quinone = orotate + a quinol</text>
        <dbReference type="Rhea" id="RHEA:30187"/>
        <dbReference type="ChEBI" id="CHEBI:24646"/>
        <dbReference type="ChEBI" id="CHEBI:30839"/>
        <dbReference type="ChEBI" id="CHEBI:30864"/>
        <dbReference type="ChEBI" id="CHEBI:132124"/>
        <dbReference type="EC" id="1.3.5.2"/>
    </reaction>
</comment>
<comment type="cofactor">
    <cofactor evidence="1">
        <name>FMN</name>
        <dbReference type="ChEBI" id="CHEBI:58210"/>
    </cofactor>
    <text evidence="1">Binds 1 FMN per subunit.</text>
</comment>
<comment type="pathway">
    <text evidence="1">Pyrimidine metabolism; UMP biosynthesis via de novo pathway; orotate from (S)-dihydroorotate (quinone route): step 1/1.</text>
</comment>
<comment type="subunit">
    <text evidence="1">Monomer.</text>
</comment>
<comment type="subcellular location">
    <subcellularLocation>
        <location evidence="1">Cell membrane</location>
        <topology evidence="1">Peripheral membrane protein</topology>
    </subcellularLocation>
</comment>
<comment type="similarity">
    <text evidence="1">Belongs to the dihydroorotate dehydrogenase family. Type 2 subfamily.</text>
</comment>
<comment type="sequence caution" evidence="2">
    <conflict type="erroneous initiation">
        <sequence resource="EMBL-CDS" id="AAZ35284"/>
    </conflict>
</comment>
<protein>
    <recommendedName>
        <fullName evidence="1">Dihydroorotate dehydrogenase (quinone)</fullName>
        <ecNumber evidence="1">1.3.5.2</ecNumber>
    </recommendedName>
    <alternativeName>
        <fullName evidence="1">DHOdehase</fullName>
        <shortName evidence="1">DHOD</shortName>
        <shortName evidence="1">DHODase</shortName>
    </alternativeName>
    <alternativeName>
        <fullName evidence="1">Dihydroorotate oxidase</fullName>
    </alternativeName>
</protein>
<feature type="chain" id="PRO_0000336482" description="Dihydroorotate dehydrogenase (quinone)">
    <location>
        <begin position="1"/>
        <end position="343"/>
    </location>
</feature>
<feature type="active site" description="Nucleophile" evidence="1">
    <location>
        <position position="174"/>
    </location>
</feature>
<feature type="binding site" evidence="1">
    <location>
        <begin position="61"/>
        <end position="65"/>
    </location>
    <ligand>
        <name>FMN</name>
        <dbReference type="ChEBI" id="CHEBI:58210"/>
    </ligand>
</feature>
<feature type="binding site" evidence="1">
    <location>
        <position position="65"/>
    </location>
    <ligand>
        <name>substrate</name>
    </ligand>
</feature>
<feature type="binding site" evidence="1">
    <location>
        <position position="85"/>
    </location>
    <ligand>
        <name>FMN</name>
        <dbReference type="ChEBI" id="CHEBI:58210"/>
    </ligand>
</feature>
<feature type="binding site" evidence="1">
    <location>
        <begin position="110"/>
        <end position="114"/>
    </location>
    <ligand>
        <name>substrate</name>
    </ligand>
</feature>
<feature type="binding site" evidence="1">
    <location>
        <position position="138"/>
    </location>
    <ligand>
        <name>FMN</name>
        <dbReference type="ChEBI" id="CHEBI:58210"/>
    </ligand>
</feature>
<feature type="binding site" evidence="1">
    <location>
        <position position="171"/>
    </location>
    <ligand>
        <name>FMN</name>
        <dbReference type="ChEBI" id="CHEBI:58210"/>
    </ligand>
</feature>
<feature type="binding site" evidence="1">
    <location>
        <position position="171"/>
    </location>
    <ligand>
        <name>substrate</name>
    </ligand>
</feature>
<feature type="binding site" evidence="1">
    <location>
        <position position="176"/>
    </location>
    <ligand>
        <name>substrate</name>
    </ligand>
</feature>
<feature type="binding site" evidence="1">
    <location>
        <position position="216"/>
    </location>
    <ligand>
        <name>FMN</name>
        <dbReference type="ChEBI" id="CHEBI:58210"/>
    </ligand>
</feature>
<feature type="binding site" evidence="1">
    <location>
        <position position="244"/>
    </location>
    <ligand>
        <name>FMN</name>
        <dbReference type="ChEBI" id="CHEBI:58210"/>
    </ligand>
</feature>
<feature type="binding site" evidence="1">
    <location>
        <begin position="245"/>
        <end position="246"/>
    </location>
    <ligand>
        <name>substrate</name>
    </ligand>
</feature>
<feature type="binding site" evidence="1">
    <location>
        <position position="267"/>
    </location>
    <ligand>
        <name>FMN</name>
        <dbReference type="ChEBI" id="CHEBI:58210"/>
    </ligand>
</feature>
<feature type="binding site" evidence="1">
    <location>
        <position position="296"/>
    </location>
    <ligand>
        <name>FMN</name>
        <dbReference type="ChEBI" id="CHEBI:58210"/>
    </ligand>
</feature>
<feature type="binding site" evidence="1">
    <location>
        <begin position="317"/>
        <end position="318"/>
    </location>
    <ligand>
        <name>FMN</name>
        <dbReference type="ChEBI" id="CHEBI:58210"/>
    </ligand>
</feature>
<gene>
    <name evidence="1" type="primary">pyrD</name>
    <name type="ordered locus">PSPPH_2077</name>
</gene>
<evidence type="ECO:0000255" key="1">
    <source>
        <dbReference type="HAMAP-Rule" id="MF_00225"/>
    </source>
</evidence>
<evidence type="ECO:0000305" key="2"/>